<gene>
    <name evidence="1" type="primary">PB2</name>
</gene>
<proteinExistence type="evidence at protein level"/>
<feature type="chain" id="PRO_0000078833" description="Polymerase basic protein 2">
    <location>
        <begin position="1"/>
        <end position="759"/>
    </location>
</feature>
<feature type="short sequence motif" description="Nuclear localization signal" evidence="1">
    <location>
        <begin position="736"/>
        <end position="739"/>
    </location>
</feature>
<feature type="site" description="Mammalian adaptation" evidence="1">
    <location>
        <position position="627"/>
    </location>
</feature>
<feature type="helix" evidence="5">
    <location>
        <begin position="2"/>
        <end position="10"/>
    </location>
</feature>
<feature type="strand" evidence="2">
    <location>
        <begin position="11"/>
        <end position="13"/>
    </location>
</feature>
<feature type="helix" evidence="5">
    <location>
        <begin position="14"/>
        <end position="22"/>
    </location>
</feature>
<feature type="helix" evidence="5">
    <location>
        <begin position="25"/>
        <end position="27"/>
    </location>
</feature>
<feature type="helix" evidence="5">
    <location>
        <begin position="28"/>
        <end position="31"/>
    </location>
</feature>
<feature type="helix" evidence="5">
    <location>
        <begin position="47"/>
        <end position="50"/>
    </location>
</feature>
<feature type="strand" evidence="2">
    <location>
        <begin position="53"/>
        <end position="55"/>
    </location>
</feature>
<feature type="strand" evidence="5">
    <location>
        <begin position="57"/>
        <end position="59"/>
    </location>
</feature>
<feature type="helix" evidence="5">
    <location>
        <begin position="63"/>
        <end position="66"/>
    </location>
</feature>
<feature type="strand" evidence="4">
    <location>
        <begin position="78"/>
        <end position="82"/>
    </location>
</feature>
<feature type="strand" evidence="5">
    <location>
        <begin position="89"/>
        <end position="91"/>
    </location>
</feature>
<feature type="helix" evidence="5">
    <location>
        <begin position="93"/>
        <end position="101"/>
    </location>
</feature>
<feature type="helix" evidence="2">
    <location>
        <begin position="108"/>
        <end position="110"/>
    </location>
</feature>
<feature type="helix" evidence="5">
    <location>
        <begin position="113"/>
        <end position="115"/>
    </location>
</feature>
<feature type="helix" evidence="5">
    <location>
        <begin position="116"/>
        <end position="125"/>
    </location>
</feature>
<feature type="strand" evidence="5">
    <location>
        <begin position="129"/>
        <end position="135"/>
    </location>
</feature>
<feature type="strand" evidence="5">
    <location>
        <begin position="143"/>
        <end position="148"/>
    </location>
</feature>
<feature type="helix" evidence="5">
    <location>
        <begin position="156"/>
        <end position="167"/>
    </location>
</feature>
<feature type="strand" evidence="4">
    <location>
        <begin position="169"/>
        <end position="171"/>
    </location>
</feature>
<feature type="turn" evidence="5">
    <location>
        <begin position="175"/>
        <end position="177"/>
    </location>
</feature>
<feature type="helix" evidence="5">
    <location>
        <begin position="184"/>
        <end position="192"/>
    </location>
</feature>
<feature type="strand" evidence="4">
    <location>
        <begin position="193"/>
        <end position="195"/>
    </location>
</feature>
<feature type="helix" evidence="5">
    <location>
        <begin position="200"/>
        <end position="211"/>
    </location>
</feature>
<feature type="strand" evidence="5">
    <location>
        <begin position="214"/>
        <end position="218"/>
    </location>
</feature>
<feature type="helix" evidence="5">
    <location>
        <begin position="226"/>
        <end position="229"/>
    </location>
</feature>
<feature type="helix" evidence="5">
    <location>
        <begin position="232"/>
        <end position="235"/>
    </location>
</feature>
<feature type="strand" evidence="5">
    <location>
        <begin position="238"/>
        <end position="245"/>
    </location>
</feature>
<feature type="helix" evidence="2">
    <location>
        <begin position="252"/>
        <end position="254"/>
    </location>
</feature>
<feature type="helix" evidence="6">
    <location>
        <begin position="255"/>
        <end position="271"/>
    </location>
</feature>
<feature type="strand" evidence="6">
    <location>
        <begin position="272"/>
        <end position="275"/>
    </location>
</feature>
<feature type="helix" evidence="6">
    <location>
        <begin position="276"/>
        <end position="286"/>
    </location>
</feature>
<feature type="helix" evidence="6">
    <location>
        <begin position="294"/>
        <end position="299"/>
    </location>
</feature>
<feature type="helix" evidence="6">
    <location>
        <begin position="306"/>
        <end position="314"/>
    </location>
</feature>
<feature type="strand" evidence="4">
    <location>
        <begin position="323"/>
        <end position="325"/>
    </location>
</feature>
<feature type="strand" evidence="4">
    <location>
        <begin position="328"/>
        <end position="330"/>
    </location>
</feature>
<feature type="strand" evidence="4">
    <location>
        <begin position="332"/>
        <end position="334"/>
    </location>
</feature>
<feature type="strand" evidence="4">
    <location>
        <begin position="342"/>
        <end position="345"/>
    </location>
</feature>
<feature type="strand" evidence="4">
    <location>
        <begin position="351"/>
        <end position="354"/>
    </location>
</feature>
<feature type="strand" evidence="4">
    <location>
        <begin position="361"/>
        <end position="363"/>
    </location>
</feature>
<feature type="strand" evidence="4">
    <location>
        <begin position="371"/>
        <end position="376"/>
    </location>
</feature>
<feature type="strand" evidence="4">
    <location>
        <begin position="381"/>
        <end position="386"/>
    </location>
</feature>
<feature type="helix" evidence="4">
    <location>
        <begin position="391"/>
        <end position="405"/>
    </location>
</feature>
<feature type="helix" evidence="4">
    <location>
        <begin position="408"/>
        <end position="411"/>
    </location>
</feature>
<feature type="helix" evidence="4">
    <location>
        <begin position="430"/>
        <end position="437"/>
    </location>
</feature>
<feature type="turn" evidence="4">
    <location>
        <begin position="438"/>
        <end position="440"/>
    </location>
</feature>
<feature type="helix" evidence="4">
    <location>
        <begin position="443"/>
        <end position="447"/>
    </location>
</feature>
<feature type="strand" evidence="2">
    <location>
        <begin position="451"/>
        <end position="453"/>
    </location>
</feature>
<feature type="strand" evidence="2">
    <location>
        <begin position="458"/>
        <end position="463"/>
    </location>
</feature>
<feature type="strand" evidence="4">
    <location>
        <begin position="465"/>
        <end position="467"/>
    </location>
</feature>
<feature type="strand" evidence="4">
    <location>
        <begin position="471"/>
        <end position="478"/>
    </location>
</feature>
<feature type="strand" evidence="3">
    <location>
        <begin position="479"/>
        <end position="481"/>
    </location>
</feature>
<feature type="strand" evidence="4">
    <location>
        <begin position="507"/>
        <end position="509"/>
    </location>
</feature>
<feature type="strand" evidence="4">
    <location>
        <begin position="511"/>
        <end position="513"/>
    </location>
</feature>
<feature type="strand" evidence="4">
    <location>
        <begin position="529"/>
        <end position="531"/>
    </location>
</feature>
<feature type="turn" evidence="4">
    <location>
        <begin position="536"/>
        <end position="539"/>
    </location>
</feature>
<feature type="helix" evidence="4">
    <location>
        <begin position="542"/>
        <end position="555"/>
    </location>
</feature>
<feature type="helix" evidence="4">
    <location>
        <begin position="557"/>
        <end position="563"/>
    </location>
</feature>
<feature type="helix" evidence="4">
    <location>
        <begin position="569"/>
        <end position="572"/>
    </location>
</feature>
<feature type="helix" evidence="2">
    <location>
        <begin position="575"/>
        <end position="577"/>
    </location>
</feature>
<feature type="helix" evidence="4">
    <location>
        <begin position="578"/>
        <end position="581"/>
    </location>
</feature>
<feature type="strand" evidence="2">
    <location>
        <begin position="586"/>
        <end position="588"/>
    </location>
</feature>
<feature type="helix" evidence="4">
    <location>
        <begin position="589"/>
        <end position="605"/>
    </location>
</feature>
<feature type="helix" evidence="4">
    <location>
        <begin position="612"/>
        <end position="618"/>
    </location>
</feature>
<feature type="helix" evidence="4">
    <location>
        <begin position="619"/>
        <end position="621"/>
    </location>
</feature>
<feature type="strand" evidence="4">
    <location>
        <begin position="622"/>
        <end position="624"/>
    </location>
</feature>
<feature type="strand" evidence="4">
    <location>
        <begin position="634"/>
        <end position="640"/>
    </location>
</feature>
<feature type="strand" evidence="4">
    <location>
        <begin position="643"/>
        <end position="651"/>
    </location>
</feature>
<feature type="strand" evidence="4">
    <location>
        <begin position="654"/>
        <end position="658"/>
    </location>
</feature>
<feature type="turn" evidence="4">
    <location>
        <begin position="660"/>
        <end position="662"/>
    </location>
</feature>
<feature type="strand" evidence="4">
    <location>
        <begin position="664"/>
        <end position="667"/>
    </location>
</feature>
<feature type="strand" evidence="4">
    <location>
        <begin position="670"/>
        <end position="674"/>
    </location>
</feature>
<feature type="strand" evidence="5">
    <location>
        <begin position="694"/>
        <end position="699"/>
    </location>
</feature>
<feature type="strand" evidence="2">
    <location>
        <begin position="702"/>
        <end position="704"/>
    </location>
</feature>
<feature type="helix" evidence="5">
    <location>
        <begin position="710"/>
        <end position="712"/>
    </location>
</feature>
<feature type="turn" evidence="6">
    <location>
        <begin position="713"/>
        <end position="715"/>
    </location>
</feature>
<feature type="turn" evidence="2">
    <location>
        <begin position="717"/>
        <end position="719"/>
    </location>
</feature>
<feature type="strand" evidence="5">
    <location>
        <begin position="721"/>
        <end position="726"/>
    </location>
</feature>
<feature type="turn" evidence="5">
    <location>
        <begin position="727"/>
        <end position="729"/>
    </location>
</feature>
<feature type="strand" evidence="5">
    <location>
        <begin position="730"/>
        <end position="736"/>
    </location>
</feature>
<feature type="helix" evidence="5">
    <location>
        <begin position="745"/>
        <end position="753"/>
    </location>
</feature>
<protein>
    <recommendedName>
        <fullName evidence="1">Polymerase basic protein 2</fullName>
    </recommendedName>
    <alternativeName>
        <fullName evidence="1">RNA-directed RNA polymerase subunit P3</fullName>
    </alternativeName>
</protein>
<comment type="function">
    <text evidence="1">Plays an essential role in transcription initiation and cap-stealing mechanism, in which cellular capped pre-mRNAs are used to generate primers for viral transcription. Recognizes and binds the 7-methylguanosine-containing cap of the target pre-RNA which is subsequently cleaved after 10-13 nucleotides by the viral protein PA. Plays a role in the initiation of the viral genome replication and modulates the activity of the ribonucleoprotein (RNP) complex. In addition, participates in the inhibition of type I interferon induction through interaction with and inhibition of the host mitochondrial antiviral signaling protein MAVS.</text>
</comment>
<comment type="subunit">
    <text evidence="1">Influenza RNA polymerase is composed of three subunits: PB1, PB2 and PA. Interacts (via N-terminus) with PB1 (via C-terminus). Interacts with nucleoprotein NP (via N-terminus). Interacts (via N-terminus) with host MAVS (via N-terminus); this interaction inhibits host innate immune response.</text>
</comment>
<comment type="subcellular location">
    <subcellularLocation>
        <location evidence="1">Virion</location>
    </subcellularLocation>
    <subcellularLocation>
        <location evidence="1">Host nucleus</location>
    </subcellularLocation>
    <subcellularLocation>
        <location evidence="1">Host mitochondrion</location>
    </subcellularLocation>
</comment>
<comment type="similarity">
    <text evidence="1">Belongs to the influenza viruses PB2 family.</text>
</comment>
<keyword id="KW-0002">3D-structure</keyword>
<keyword id="KW-1157">Cap snatching</keyword>
<keyword id="KW-1262">Eukaryotic host gene expression shutoff by virus</keyword>
<keyword id="KW-1191">Eukaryotic host transcription shutoff by virus</keyword>
<keyword id="KW-1190">Host gene expression shutoff by virus</keyword>
<keyword id="KW-1045">Host mitochondrion</keyword>
<keyword id="KW-1048">Host nucleus</keyword>
<keyword id="KW-0945">Host-virus interaction</keyword>
<keyword id="KW-1090">Inhibition of host innate immune response by virus</keyword>
<keyword id="KW-1097">Inhibition of host MAVS by virus</keyword>
<keyword id="KW-1113">Inhibition of host RLR pathway by virus</keyword>
<keyword id="KW-1104">Inhibition of host RNA polymerase II by virus</keyword>
<keyword id="KW-0506">mRNA capping</keyword>
<keyword id="KW-0507">mRNA processing</keyword>
<keyword id="KW-0899">Viral immunoevasion</keyword>
<keyword id="KW-1195">Viral transcription</keyword>
<keyword id="KW-0946">Virion</keyword>
<organism>
    <name type="scientific">Influenza A virus (strain A/Northern Territory/60/1968 H3N2)</name>
    <name type="common">Influenza A virus (strain NT60)</name>
    <name type="synonym">Influenza A virus (strain A/NT/60/1968 H3N2)</name>
    <dbReference type="NCBI Taxonomy" id="384505"/>
    <lineage>
        <taxon>Viruses</taxon>
        <taxon>Riboviria</taxon>
        <taxon>Orthornavirae</taxon>
        <taxon>Negarnaviricota</taxon>
        <taxon>Polyploviricotina</taxon>
        <taxon>Insthoviricetes</taxon>
        <taxon>Articulavirales</taxon>
        <taxon>Orthomyxoviridae</taxon>
        <taxon>Alphainfluenzavirus</taxon>
        <taxon>Alphainfluenzavirus influenzae</taxon>
        <taxon>Influenza A virus</taxon>
    </lineage>
</organism>
<organismHost>
    <name type="scientific">Aves</name>
    <dbReference type="NCBI Taxonomy" id="8782"/>
</organismHost>
<organismHost>
    <name type="scientific">Cetacea</name>
    <name type="common">whales</name>
    <dbReference type="NCBI Taxonomy" id="9721"/>
</organismHost>
<organismHost>
    <name type="scientific">Homo sapiens</name>
    <name type="common">Human</name>
    <dbReference type="NCBI Taxonomy" id="9606"/>
</organismHost>
<organismHost>
    <name type="scientific">Phocidae</name>
    <name type="common">true seals</name>
    <dbReference type="NCBI Taxonomy" id="9709"/>
</organismHost>
<organismHost>
    <name type="scientific">Sus scrofa</name>
    <name type="common">Pig</name>
    <dbReference type="NCBI Taxonomy" id="9823"/>
</organismHost>
<dbReference type="EMBL" id="J02140">
    <property type="protein sequence ID" value="AAA43613.1"/>
    <property type="molecule type" value="Genomic_RNA"/>
</dbReference>
<dbReference type="PIR" id="A93458">
    <property type="entry name" value="P3IV68"/>
</dbReference>
<dbReference type="PDB" id="6QNW">
    <property type="method" value="X-ray"/>
    <property type="resolution" value="3.31 A"/>
    <property type="chains" value="C/F/I/L=1-759"/>
</dbReference>
<dbReference type="PDB" id="6QPG">
    <property type="method" value="X-ray"/>
    <property type="resolution" value="3.34 A"/>
    <property type="chains" value="C/F/I/L=1-759"/>
</dbReference>
<dbReference type="PDB" id="6QX3">
    <property type="method" value="EM"/>
    <property type="resolution" value="3.79 A"/>
    <property type="chains" value="C=1-756"/>
</dbReference>
<dbReference type="PDB" id="6QX8">
    <property type="method" value="EM"/>
    <property type="resolution" value="4.07 A"/>
    <property type="chains" value="C/G=1-759"/>
</dbReference>
<dbReference type="PDB" id="6QXE">
    <property type="method" value="EM"/>
    <property type="resolution" value="4.15 A"/>
    <property type="chains" value="C/G=1-759"/>
</dbReference>
<dbReference type="PDB" id="6RR7">
    <property type="method" value="EM"/>
    <property type="resolution" value="3.01 A"/>
    <property type="chains" value="C=1-759"/>
</dbReference>
<dbReference type="PDB" id="8Y7M">
    <property type="method" value="EM"/>
    <property type="resolution" value="3.00 A"/>
    <property type="chains" value="C/G=1-759"/>
</dbReference>
<dbReference type="PDB" id="8Y7O">
    <property type="method" value="EM"/>
    <property type="resolution" value="3.00 A"/>
    <property type="chains" value="C/D/G/K/O/P=1-759"/>
</dbReference>
<dbReference type="PDBsum" id="6QNW"/>
<dbReference type="PDBsum" id="6QPG"/>
<dbReference type="PDBsum" id="6QX3"/>
<dbReference type="PDBsum" id="6QX8"/>
<dbReference type="PDBsum" id="6QXE"/>
<dbReference type="PDBsum" id="6RR7"/>
<dbReference type="PDBsum" id="8Y7M"/>
<dbReference type="PDBsum" id="8Y7O"/>
<dbReference type="EMDB" id="EMD-39020"/>
<dbReference type="EMDB" id="EMD-39022"/>
<dbReference type="EMDB" id="EMD-4661"/>
<dbReference type="EMDB" id="EMD-4663"/>
<dbReference type="EMDB" id="EMD-4666"/>
<dbReference type="EMDB" id="EMD-4986"/>
<dbReference type="SMR" id="P03429"/>
<dbReference type="IntAct" id="P03429">
    <property type="interactions" value="3"/>
</dbReference>
<dbReference type="GO" id="GO:0033650">
    <property type="term" value="C:host cell mitochondrion"/>
    <property type="evidence" value="ECO:0007669"/>
    <property type="project" value="UniProtKB-SubCell"/>
</dbReference>
<dbReference type="GO" id="GO:0042025">
    <property type="term" value="C:host cell nucleus"/>
    <property type="evidence" value="ECO:0007669"/>
    <property type="project" value="UniProtKB-SubCell"/>
</dbReference>
<dbReference type="GO" id="GO:0044423">
    <property type="term" value="C:virion component"/>
    <property type="evidence" value="ECO:0007669"/>
    <property type="project" value="UniProtKB-UniRule"/>
</dbReference>
<dbReference type="GO" id="GO:0003723">
    <property type="term" value="F:RNA binding"/>
    <property type="evidence" value="ECO:0007669"/>
    <property type="project" value="UniProtKB-UniRule"/>
</dbReference>
<dbReference type="GO" id="GO:0003968">
    <property type="term" value="F:RNA-directed RNA polymerase activity"/>
    <property type="evidence" value="ECO:0007669"/>
    <property type="project" value="UniProtKB-UniRule"/>
</dbReference>
<dbReference type="GO" id="GO:0006370">
    <property type="term" value="P:7-methylguanosine mRNA capping"/>
    <property type="evidence" value="ECO:0007669"/>
    <property type="project" value="UniProtKB-UniRule"/>
</dbReference>
<dbReference type="GO" id="GO:0075526">
    <property type="term" value="P:cap snatching"/>
    <property type="evidence" value="ECO:0007669"/>
    <property type="project" value="UniProtKB-UniRule"/>
</dbReference>
<dbReference type="GO" id="GO:0006351">
    <property type="term" value="P:DNA-templated transcription"/>
    <property type="evidence" value="ECO:0007669"/>
    <property type="project" value="UniProtKB-UniRule"/>
</dbReference>
<dbReference type="GO" id="GO:0039545">
    <property type="term" value="P:symbiont-mediated suppression of host cytoplasmic pattern recognition receptor signaling pathway via inhibition of MAVS activity"/>
    <property type="evidence" value="ECO:0007669"/>
    <property type="project" value="UniProtKB-UniRule"/>
</dbReference>
<dbReference type="GO" id="GO:0039657">
    <property type="term" value="P:symbiont-mediated suppression of host gene expression"/>
    <property type="evidence" value="ECO:0007669"/>
    <property type="project" value="UniProtKB-KW"/>
</dbReference>
<dbReference type="GO" id="GO:0039523">
    <property type="term" value="P:symbiont-mediated suppression of host mRNA transcription via inhibition of RNA polymerase II activity"/>
    <property type="evidence" value="ECO:0007669"/>
    <property type="project" value="UniProtKB-UniRule"/>
</dbReference>
<dbReference type="GO" id="GO:0039694">
    <property type="term" value="P:viral RNA genome replication"/>
    <property type="evidence" value="ECO:0007669"/>
    <property type="project" value="InterPro"/>
</dbReference>
<dbReference type="FunFam" id="3.30.30.90:FF:000001">
    <property type="entry name" value="Polymerase basic protein 2"/>
    <property type="match status" value="1"/>
</dbReference>
<dbReference type="Gene3D" id="3.30.30.90">
    <property type="entry name" value="Polymerase Basic Protein 2, C-terminal domain"/>
    <property type="match status" value="1"/>
</dbReference>
<dbReference type="HAMAP" id="MF_04062">
    <property type="entry name" value="INV_PB2"/>
    <property type="match status" value="1"/>
</dbReference>
<dbReference type="InterPro" id="IPR049110">
    <property type="entry name" value="Flu_PB2_2nd"/>
</dbReference>
<dbReference type="InterPro" id="IPR049114">
    <property type="entry name" value="Flu_PB2_6th"/>
</dbReference>
<dbReference type="InterPro" id="IPR049115">
    <property type="entry name" value="Flu_PB2_C"/>
</dbReference>
<dbReference type="InterPro" id="IPR048298">
    <property type="entry name" value="Flu_PB2_CAP-bd"/>
</dbReference>
<dbReference type="InterPro" id="IPR049111">
    <property type="entry name" value="Flu_PB2_middle"/>
</dbReference>
<dbReference type="InterPro" id="IPR049106">
    <property type="entry name" value="Flu_PB2_N"/>
</dbReference>
<dbReference type="InterPro" id="IPR001591">
    <property type="entry name" value="INV_PB2"/>
</dbReference>
<dbReference type="InterPro" id="IPR049113">
    <property type="entry name" value="PB2_helical"/>
</dbReference>
<dbReference type="InterPro" id="IPR037258">
    <property type="entry name" value="PDB2_C"/>
</dbReference>
<dbReference type="Pfam" id="PF20947">
    <property type="entry name" value="Flu_PB2_1st"/>
    <property type="match status" value="1"/>
</dbReference>
<dbReference type="Pfam" id="PF20948">
    <property type="entry name" value="Flu_PB2_2nd"/>
    <property type="match status" value="1"/>
</dbReference>
<dbReference type="Pfam" id="PF20949">
    <property type="entry name" value="Flu_PB2_3rd"/>
    <property type="match status" value="1"/>
</dbReference>
<dbReference type="Pfam" id="PF20950">
    <property type="entry name" value="Flu_PB2_4th"/>
    <property type="match status" value="1"/>
</dbReference>
<dbReference type="Pfam" id="PF00604">
    <property type="entry name" value="Flu_PB2_5th"/>
    <property type="match status" value="1"/>
</dbReference>
<dbReference type="Pfam" id="PF20951">
    <property type="entry name" value="Flu_PB2_6th"/>
    <property type="match status" value="1"/>
</dbReference>
<dbReference type="Pfam" id="PF20952">
    <property type="entry name" value="Flu_PB2_7th"/>
    <property type="match status" value="1"/>
</dbReference>
<dbReference type="SUPFAM" id="SSF160453">
    <property type="entry name" value="PB2 C-terminal domain-like"/>
    <property type="match status" value="1"/>
</dbReference>
<name>PB2_I68A6</name>
<sequence>MERIKELRNLMSQSRTREILTKTTVDHMAIIKKYTSGRQEKNPSLRMKWMMAMKYPITADKRITEMVPERNEQGQTLWSKMSDAGSDRVMVSPLAVTWWNRNGPMTSTVHYPKVYKTYFEKVERLKHGTFGPVHFRNQVKIRRRVDINPGHADLSAKEAQDVIMEVVFPNEVGARILTSESQLTITKEKKEELQDCKISPLMVAYMLERELVRKTRFLPVAGGTSSVYIEVLHLTQGTCWEQMYTPGGEVRNDDVDQSLIIAARNIVRRAAVSADPLASLLEMCHSTQIGGTRMVDILRQNPTEEQAVDICKAAMGLRISSSFSFGGFTFKRTSGSSIKREEELLTGNLQTLKIRVHDGYEEFTMVGKRATAILRKATRRLVQLIVSGRDEQSVAEAIIVAMVFSQEDCMIKAVRGDLNFVNRANQRLNPMHQLLRHFQKDAKVLFQNWGIEHIDNVMGMIGVLPDMTPSTEMSMRGIRVSKMGVDEYSSTERVVVSIDRFLRVRDQRGNVLLSPEEVSETQGTEKLTITYSSSMMWEINGPESVLVNTYQWIIRNWETVKIQWSQNPTMLYNKMEFEPFQSLVPKAIRGQYSGFVRTLFQQMRDVLGTFDTTQIIKLLPFAAAPPKQSRMQFSSLTVNVRGSGMRILVRGNSPAFNYNKTTKRLTILGKDAGTLIEDPDEGTSGVESAVLRGFLILGKEDRRYGPALSINELSNLAKGEKANVLIGQGDVVLVMKRKRDSSILTDSQTATKRIRMAIN</sequence>
<reference key="1">
    <citation type="journal article" date="1983" name="Nucleic Acids Res.">
        <title>The sequence of RNA segment 1 of influenza virus A/NT/60/68 and its comparison with the corresponding segment of strains A/PR/8/34 and A/WSN/33.</title>
        <authorList>
            <person name="Jones K.L."/>
            <person name="Huddleston J.A."/>
            <person name="Brownlee G.G."/>
        </authorList>
    </citation>
    <scope>NUCLEOTIDE SEQUENCE [GENOMIC RNA]</scope>
</reference>
<accession>P03429</accession>
<evidence type="ECO:0000255" key="1">
    <source>
        <dbReference type="HAMAP-Rule" id="MF_04062"/>
    </source>
</evidence>
<evidence type="ECO:0007829" key="2">
    <source>
        <dbReference type="PDB" id="6QNW"/>
    </source>
</evidence>
<evidence type="ECO:0007829" key="3">
    <source>
        <dbReference type="PDB" id="6QPG"/>
    </source>
</evidence>
<evidence type="ECO:0007829" key="4">
    <source>
        <dbReference type="PDB" id="6RR7"/>
    </source>
</evidence>
<evidence type="ECO:0007829" key="5">
    <source>
        <dbReference type="PDB" id="8Y7M"/>
    </source>
</evidence>
<evidence type="ECO:0007829" key="6">
    <source>
        <dbReference type="PDB" id="8Y7O"/>
    </source>
</evidence>